<organism>
    <name type="scientific">Shigella boydii serotype 4 (strain Sb227)</name>
    <dbReference type="NCBI Taxonomy" id="300268"/>
    <lineage>
        <taxon>Bacteria</taxon>
        <taxon>Pseudomonadati</taxon>
        <taxon>Pseudomonadota</taxon>
        <taxon>Gammaproteobacteria</taxon>
        <taxon>Enterobacterales</taxon>
        <taxon>Enterobacteriaceae</taxon>
        <taxon>Shigella</taxon>
    </lineage>
</organism>
<evidence type="ECO:0000255" key="1">
    <source>
        <dbReference type="HAMAP-Rule" id="MF_00470"/>
    </source>
</evidence>
<protein>
    <recommendedName>
        <fullName evidence="1">o-succinylbenzoate synthase</fullName>
        <shortName evidence="1">OSB synthase</shortName>
        <shortName evidence="1">OSBS</shortName>
        <ecNumber evidence="1">4.2.1.113</ecNumber>
    </recommendedName>
    <alternativeName>
        <fullName evidence="1">4-(2'-carboxyphenyl)-4-oxybutyric acid synthase</fullName>
    </alternativeName>
    <alternativeName>
        <fullName evidence="1">o-succinylbenzoic acid synthase</fullName>
    </alternativeName>
</protein>
<reference key="1">
    <citation type="journal article" date="2005" name="Nucleic Acids Res.">
        <title>Genome dynamics and diversity of Shigella species, the etiologic agents of bacillary dysentery.</title>
        <authorList>
            <person name="Yang F."/>
            <person name="Yang J."/>
            <person name="Zhang X."/>
            <person name="Chen L."/>
            <person name="Jiang Y."/>
            <person name="Yan Y."/>
            <person name="Tang X."/>
            <person name="Wang J."/>
            <person name="Xiong Z."/>
            <person name="Dong J."/>
            <person name="Xue Y."/>
            <person name="Zhu Y."/>
            <person name="Xu X."/>
            <person name="Sun L."/>
            <person name="Chen S."/>
            <person name="Nie H."/>
            <person name="Peng J."/>
            <person name="Xu J."/>
            <person name="Wang Y."/>
            <person name="Yuan Z."/>
            <person name="Wen Y."/>
            <person name="Yao Z."/>
            <person name="Shen Y."/>
            <person name="Qiang B."/>
            <person name="Hou Y."/>
            <person name="Yu J."/>
            <person name="Jin Q."/>
        </authorList>
    </citation>
    <scope>NUCLEOTIDE SEQUENCE [LARGE SCALE GENOMIC DNA]</scope>
    <source>
        <strain>Sb227</strain>
    </source>
</reference>
<accession>Q31YJ6</accession>
<keyword id="KW-0456">Lyase</keyword>
<keyword id="KW-0460">Magnesium</keyword>
<keyword id="KW-0474">Menaquinone biosynthesis</keyword>
<keyword id="KW-0479">Metal-binding</keyword>
<dbReference type="EC" id="4.2.1.113" evidence="1"/>
<dbReference type="EMBL" id="CP000036">
    <property type="protein sequence ID" value="ABB66862.1"/>
    <property type="molecule type" value="Genomic_DNA"/>
</dbReference>
<dbReference type="RefSeq" id="WP_001255598.1">
    <property type="nucleotide sequence ID" value="NC_007613.1"/>
</dbReference>
<dbReference type="SMR" id="Q31YJ6"/>
<dbReference type="KEGG" id="sbo:SBO_2298"/>
<dbReference type="HOGENOM" id="CLU_030273_0_1_6"/>
<dbReference type="UniPathway" id="UPA00079"/>
<dbReference type="UniPathway" id="UPA01057">
    <property type="reaction ID" value="UER00165"/>
</dbReference>
<dbReference type="Proteomes" id="UP000007067">
    <property type="component" value="Chromosome"/>
</dbReference>
<dbReference type="GO" id="GO:0000287">
    <property type="term" value="F:magnesium ion binding"/>
    <property type="evidence" value="ECO:0007669"/>
    <property type="project" value="UniProtKB-UniRule"/>
</dbReference>
<dbReference type="GO" id="GO:0043748">
    <property type="term" value="F:O-succinylbenzoate synthase activity"/>
    <property type="evidence" value="ECO:0007669"/>
    <property type="project" value="UniProtKB-EC"/>
</dbReference>
<dbReference type="GO" id="GO:0009234">
    <property type="term" value="P:menaquinone biosynthetic process"/>
    <property type="evidence" value="ECO:0007669"/>
    <property type="project" value="UniProtKB-UniRule"/>
</dbReference>
<dbReference type="CDD" id="cd03320">
    <property type="entry name" value="OSBS"/>
    <property type="match status" value="1"/>
</dbReference>
<dbReference type="FunFam" id="3.20.20.120:FF:000006">
    <property type="entry name" value="o-succinylbenzoate synthase"/>
    <property type="match status" value="1"/>
</dbReference>
<dbReference type="FunFam" id="3.30.390.10:FF:000005">
    <property type="entry name" value="o-succinylbenzoate synthase"/>
    <property type="match status" value="1"/>
</dbReference>
<dbReference type="Gene3D" id="3.20.20.120">
    <property type="entry name" value="Enolase-like C-terminal domain"/>
    <property type="match status" value="1"/>
</dbReference>
<dbReference type="Gene3D" id="3.30.390.10">
    <property type="entry name" value="Enolase-like, N-terminal domain"/>
    <property type="match status" value="1"/>
</dbReference>
<dbReference type="HAMAP" id="MF_00470">
    <property type="entry name" value="MenC_1"/>
    <property type="match status" value="1"/>
</dbReference>
<dbReference type="InterPro" id="IPR036849">
    <property type="entry name" value="Enolase-like_C_sf"/>
</dbReference>
<dbReference type="InterPro" id="IPR029017">
    <property type="entry name" value="Enolase-like_N"/>
</dbReference>
<dbReference type="InterPro" id="IPR029065">
    <property type="entry name" value="Enolase_C-like"/>
</dbReference>
<dbReference type="InterPro" id="IPR013342">
    <property type="entry name" value="Mandelate_racemase_C"/>
</dbReference>
<dbReference type="InterPro" id="IPR010196">
    <property type="entry name" value="OSB_synthase_MenC1"/>
</dbReference>
<dbReference type="InterPro" id="IPR041338">
    <property type="entry name" value="OSBS_N"/>
</dbReference>
<dbReference type="NCBIfam" id="TIGR01927">
    <property type="entry name" value="menC_gam_Gplu"/>
    <property type="match status" value="1"/>
</dbReference>
<dbReference type="NCBIfam" id="NF003473">
    <property type="entry name" value="PRK05105.1"/>
    <property type="match status" value="1"/>
</dbReference>
<dbReference type="PANTHER" id="PTHR48073:SF2">
    <property type="entry name" value="O-SUCCINYLBENZOATE SYNTHASE"/>
    <property type="match status" value="1"/>
</dbReference>
<dbReference type="PANTHER" id="PTHR48073">
    <property type="entry name" value="O-SUCCINYLBENZOATE SYNTHASE-RELATED"/>
    <property type="match status" value="1"/>
</dbReference>
<dbReference type="Pfam" id="PF21508">
    <property type="entry name" value="MenC_N"/>
    <property type="match status" value="1"/>
</dbReference>
<dbReference type="Pfam" id="PF13378">
    <property type="entry name" value="MR_MLE_C"/>
    <property type="match status" value="1"/>
</dbReference>
<dbReference type="SFLD" id="SFLDS00001">
    <property type="entry name" value="Enolase"/>
    <property type="match status" value="1"/>
</dbReference>
<dbReference type="SFLD" id="SFLDF00009">
    <property type="entry name" value="o-succinylbenzoate_synthase"/>
    <property type="match status" value="1"/>
</dbReference>
<dbReference type="SMART" id="SM00922">
    <property type="entry name" value="MR_MLE"/>
    <property type="match status" value="1"/>
</dbReference>
<dbReference type="SUPFAM" id="SSF51604">
    <property type="entry name" value="Enolase C-terminal domain-like"/>
    <property type="match status" value="1"/>
</dbReference>
<dbReference type="SUPFAM" id="SSF54826">
    <property type="entry name" value="Enolase N-terminal domain-like"/>
    <property type="match status" value="1"/>
</dbReference>
<gene>
    <name evidence="1" type="primary">menC</name>
    <name type="ordered locus">SBO_2298</name>
</gene>
<sequence>MRSAQVYRWQIPMDAGVVLRDRRLKTRDGLYVCLREGEREGWGEISPLPGFSQETWEEAQSVLLAWVNNWLAGDCELLQMPSIAFGVSCALAELADTLPQAANYRAAPLCNGDPDDLILKLADMPGEKVAKVKVGLYEAVRDGMVVNLLLEAIPDLHLRLDANRAWTPLKGQQFAKYVNPDYRHRIAFLEEPCKTRDDSRAFARETGIAIAWDESLREPDFAFVAEEGVRAVVIKPTLTGSLEKVREQVQAAHALRLTAVISSSIESSLGLTQLARIAAWLTPDTIPGLDTLDLMQAQQVRRWPGSTLPVVEVDALERLL</sequence>
<feature type="chain" id="PRO_1000013811" description="o-succinylbenzoate synthase">
    <location>
        <begin position="1"/>
        <end position="320"/>
    </location>
</feature>
<feature type="active site" description="Proton donor" evidence="1">
    <location>
        <position position="133"/>
    </location>
</feature>
<feature type="active site" description="Proton acceptor" evidence="1">
    <location>
        <position position="235"/>
    </location>
</feature>
<feature type="binding site" evidence="1">
    <location>
        <position position="161"/>
    </location>
    <ligand>
        <name>Mg(2+)</name>
        <dbReference type="ChEBI" id="CHEBI:18420"/>
    </ligand>
</feature>
<feature type="binding site" evidence="1">
    <location>
        <position position="190"/>
    </location>
    <ligand>
        <name>Mg(2+)</name>
        <dbReference type="ChEBI" id="CHEBI:18420"/>
    </ligand>
</feature>
<feature type="binding site" evidence="1">
    <location>
        <position position="213"/>
    </location>
    <ligand>
        <name>Mg(2+)</name>
        <dbReference type="ChEBI" id="CHEBI:18420"/>
    </ligand>
</feature>
<name>MENC_SHIBS</name>
<comment type="function">
    <text evidence="1">Converts 2-succinyl-6-hydroxy-2,4-cyclohexadiene-1-carboxylate (SHCHC) to 2-succinylbenzoate (OSB).</text>
</comment>
<comment type="catalytic activity">
    <reaction evidence="1">
        <text>(1R,6R)-6-hydroxy-2-succinyl-cyclohexa-2,4-diene-1-carboxylate = 2-succinylbenzoate + H2O</text>
        <dbReference type="Rhea" id="RHEA:10196"/>
        <dbReference type="ChEBI" id="CHEBI:15377"/>
        <dbReference type="ChEBI" id="CHEBI:18325"/>
        <dbReference type="ChEBI" id="CHEBI:58689"/>
        <dbReference type="EC" id="4.2.1.113"/>
    </reaction>
</comment>
<comment type="cofactor">
    <cofactor evidence="1">
        <name>a divalent metal cation</name>
        <dbReference type="ChEBI" id="CHEBI:60240"/>
    </cofactor>
</comment>
<comment type="pathway">
    <text evidence="1">Quinol/quinone metabolism; 1,4-dihydroxy-2-naphthoate biosynthesis; 1,4-dihydroxy-2-naphthoate from chorismate: step 4/7.</text>
</comment>
<comment type="pathway">
    <text evidence="1">Quinol/quinone metabolism; menaquinone biosynthesis.</text>
</comment>
<comment type="similarity">
    <text evidence="1">Belongs to the mandelate racemase/muconate lactonizing enzyme family. MenC type 1 subfamily.</text>
</comment>
<proteinExistence type="inferred from homology"/>